<name>CYB_CRAGR</name>
<feature type="chain" id="PRO_0000060818" description="Cytochrome b">
    <location>
        <begin position="1"/>
        <end position="379"/>
    </location>
</feature>
<feature type="transmembrane region" description="Helical" evidence="2">
    <location>
        <begin position="33"/>
        <end position="53"/>
    </location>
</feature>
<feature type="transmembrane region" description="Helical" evidence="2">
    <location>
        <begin position="77"/>
        <end position="98"/>
    </location>
</feature>
<feature type="transmembrane region" description="Helical" evidence="2">
    <location>
        <begin position="113"/>
        <end position="133"/>
    </location>
</feature>
<feature type="transmembrane region" description="Helical" evidence="2">
    <location>
        <begin position="178"/>
        <end position="198"/>
    </location>
</feature>
<feature type="transmembrane region" description="Helical" evidence="2">
    <location>
        <begin position="226"/>
        <end position="246"/>
    </location>
</feature>
<feature type="transmembrane region" description="Helical" evidence="2">
    <location>
        <begin position="288"/>
        <end position="308"/>
    </location>
</feature>
<feature type="transmembrane region" description="Helical" evidence="2">
    <location>
        <begin position="320"/>
        <end position="340"/>
    </location>
</feature>
<feature type="transmembrane region" description="Helical" evidence="2">
    <location>
        <begin position="347"/>
        <end position="367"/>
    </location>
</feature>
<feature type="binding site" description="axial binding residue" evidence="2">
    <location>
        <position position="83"/>
    </location>
    <ligand>
        <name>heme b</name>
        <dbReference type="ChEBI" id="CHEBI:60344"/>
        <label>b562</label>
    </ligand>
    <ligandPart>
        <name>Fe</name>
        <dbReference type="ChEBI" id="CHEBI:18248"/>
    </ligandPart>
</feature>
<feature type="binding site" description="axial binding residue" evidence="2">
    <location>
        <position position="97"/>
    </location>
    <ligand>
        <name>heme b</name>
        <dbReference type="ChEBI" id="CHEBI:60344"/>
        <label>b566</label>
    </ligand>
    <ligandPart>
        <name>Fe</name>
        <dbReference type="ChEBI" id="CHEBI:18248"/>
    </ligandPart>
</feature>
<feature type="binding site" description="axial binding residue" evidence="2">
    <location>
        <position position="182"/>
    </location>
    <ligand>
        <name>heme b</name>
        <dbReference type="ChEBI" id="CHEBI:60344"/>
        <label>b562</label>
    </ligand>
    <ligandPart>
        <name>Fe</name>
        <dbReference type="ChEBI" id="CHEBI:18248"/>
    </ligandPart>
</feature>
<feature type="binding site" description="axial binding residue" evidence="2">
    <location>
        <position position="196"/>
    </location>
    <ligand>
        <name>heme b</name>
        <dbReference type="ChEBI" id="CHEBI:60344"/>
        <label>b566</label>
    </ligand>
    <ligandPart>
        <name>Fe</name>
        <dbReference type="ChEBI" id="CHEBI:18248"/>
    </ligandPart>
</feature>
<feature type="binding site" evidence="2">
    <location>
        <position position="201"/>
    </location>
    <ligand>
        <name>a ubiquinone</name>
        <dbReference type="ChEBI" id="CHEBI:16389"/>
    </ligand>
</feature>
<geneLocation type="mitochondrion"/>
<reference key="1">
    <citation type="journal article" date="1993" name="Mol. Phylogenet. Evol.">
        <title>Phylogenetic relationships of pocket gophers (Cratogeomys and Pappogeomys) based on mitochondrial DNA cytochrome b sequences.</title>
        <authorList>
            <person name="Dewalt T.S."/>
            <person name="Sudman P.D."/>
            <person name="Hafner M.S."/>
            <person name="Davis S.K."/>
        </authorList>
    </citation>
    <scope>NUCLEOTIDE SEQUENCE [GENOMIC DNA]</scope>
</reference>
<sequence length="379" mass="42963">MTIMRKSHPLMKIVNHDFIDLPTPPNISGWWNFGSLLGLCLILQIFTGLFLAMHYTSDTLTAFSSVTHICRDVNYGWLIRYMHANGASLFFMCLYIHIGRGIYYGSYLYTETWNIGILLLFLTMATAFMGYVLPWGQMSFWGATVITNLLSAMPYIGQDLVEWIWGGFSVDKATLTRFFALHFITPFIITAMIMVHLLFLHETGSNNPLGLPSNCGKVPFHPYYTTKDFMGVILLLTLFMTLVLFFPDKLGDPDNYTPANPLNTPPHIKPEWYFLFAYAILRSIPNKLGGVMALAFSILVLALLPYLHTSKQRSLSFRPLSQTLFWMLVSDVIALTWIGGLPVESPYIMIGQVASVLYFSIILIFMPIAGLIENKMLKL</sequence>
<dbReference type="EMBL" id="L11907">
    <property type="protein sequence ID" value="AAA97493.1"/>
    <property type="molecule type" value="Genomic_DNA"/>
</dbReference>
<dbReference type="SMR" id="Q34108"/>
<dbReference type="GO" id="GO:0005743">
    <property type="term" value="C:mitochondrial inner membrane"/>
    <property type="evidence" value="ECO:0007669"/>
    <property type="project" value="UniProtKB-SubCell"/>
</dbReference>
<dbReference type="GO" id="GO:0045275">
    <property type="term" value="C:respiratory chain complex III"/>
    <property type="evidence" value="ECO:0007669"/>
    <property type="project" value="InterPro"/>
</dbReference>
<dbReference type="GO" id="GO:0046872">
    <property type="term" value="F:metal ion binding"/>
    <property type="evidence" value="ECO:0007669"/>
    <property type="project" value="UniProtKB-KW"/>
</dbReference>
<dbReference type="GO" id="GO:0008121">
    <property type="term" value="F:ubiquinol-cytochrome-c reductase activity"/>
    <property type="evidence" value="ECO:0007669"/>
    <property type="project" value="InterPro"/>
</dbReference>
<dbReference type="GO" id="GO:0006122">
    <property type="term" value="P:mitochondrial electron transport, ubiquinol to cytochrome c"/>
    <property type="evidence" value="ECO:0007669"/>
    <property type="project" value="TreeGrafter"/>
</dbReference>
<dbReference type="CDD" id="cd00290">
    <property type="entry name" value="cytochrome_b_C"/>
    <property type="match status" value="1"/>
</dbReference>
<dbReference type="CDD" id="cd00284">
    <property type="entry name" value="Cytochrome_b_N"/>
    <property type="match status" value="1"/>
</dbReference>
<dbReference type="FunFam" id="1.20.810.10:FF:000002">
    <property type="entry name" value="Cytochrome b"/>
    <property type="match status" value="1"/>
</dbReference>
<dbReference type="Gene3D" id="1.20.810.10">
    <property type="entry name" value="Cytochrome Bc1 Complex, Chain C"/>
    <property type="match status" value="1"/>
</dbReference>
<dbReference type="InterPro" id="IPR005798">
    <property type="entry name" value="Cyt_b/b6_C"/>
</dbReference>
<dbReference type="InterPro" id="IPR036150">
    <property type="entry name" value="Cyt_b/b6_C_sf"/>
</dbReference>
<dbReference type="InterPro" id="IPR005797">
    <property type="entry name" value="Cyt_b/b6_N"/>
</dbReference>
<dbReference type="InterPro" id="IPR027387">
    <property type="entry name" value="Cytb/b6-like_sf"/>
</dbReference>
<dbReference type="InterPro" id="IPR030689">
    <property type="entry name" value="Cytochrome_b"/>
</dbReference>
<dbReference type="InterPro" id="IPR048260">
    <property type="entry name" value="Cytochrome_b_C_euk/bac"/>
</dbReference>
<dbReference type="InterPro" id="IPR048259">
    <property type="entry name" value="Cytochrome_b_N_euk/bac"/>
</dbReference>
<dbReference type="InterPro" id="IPR016174">
    <property type="entry name" value="Di-haem_cyt_TM"/>
</dbReference>
<dbReference type="PANTHER" id="PTHR19271">
    <property type="entry name" value="CYTOCHROME B"/>
    <property type="match status" value="1"/>
</dbReference>
<dbReference type="PANTHER" id="PTHR19271:SF16">
    <property type="entry name" value="CYTOCHROME B"/>
    <property type="match status" value="1"/>
</dbReference>
<dbReference type="Pfam" id="PF00032">
    <property type="entry name" value="Cytochrom_B_C"/>
    <property type="match status" value="1"/>
</dbReference>
<dbReference type="Pfam" id="PF00033">
    <property type="entry name" value="Cytochrome_B"/>
    <property type="match status" value="1"/>
</dbReference>
<dbReference type="PIRSF" id="PIRSF038885">
    <property type="entry name" value="COB"/>
    <property type="match status" value="1"/>
</dbReference>
<dbReference type="SUPFAM" id="SSF81648">
    <property type="entry name" value="a domain/subunit of cytochrome bc1 complex (Ubiquinol-cytochrome c reductase)"/>
    <property type="match status" value="1"/>
</dbReference>
<dbReference type="SUPFAM" id="SSF81342">
    <property type="entry name" value="Transmembrane di-heme cytochromes"/>
    <property type="match status" value="1"/>
</dbReference>
<dbReference type="PROSITE" id="PS51003">
    <property type="entry name" value="CYTB_CTER"/>
    <property type="match status" value="1"/>
</dbReference>
<dbReference type="PROSITE" id="PS51002">
    <property type="entry name" value="CYTB_NTER"/>
    <property type="match status" value="1"/>
</dbReference>
<gene>
    <name type="primary">MT-CYB</name>
    <name type="synonym">COB</name>
    <name type="synonym">CYTB</name>
    <name type="synonym">MTCYB</name>
</gene>
<accession>Q34108</accession>
<organism>
    <name type="scientific">Cratogeomys goldmani rubellus</name>
    <name type="common">Goldman's pocket gopher</name>
    <name type="synonym">Pappogeomys goldmani rubellus</name>
    <dbReference type="NCBI Taxonomy" id="37950"/>
    <lineage>
        <taxon>Eukaryota</taxon>
        <taxon>Metazoa</taxon>
        <taxon>Chordata</taxon>
        <taxon>Craniata</taxon>
        <taxon>Vertebrata</taxon>
        <taxon>Euteleostomi</taxon>
        <taxon>Mammalia</taxon>
        <taxon>Eutheria</taxon>
        <taxon>Euarchontoglires</taxon>
        <taxon>Glires</taxon>
        <taxon>Rodentia</taxon>
        <taxon>Castorimorpha</taxon>
        <taxon>Geomyidae</taxon>
        <taxon>Cratogeomys</taxon>
    </lineage>
</organism>
<keyword id="KW-0249">Electron transport</keyword>
<keyword id="KW-0349">Heme</keyword>
<keyword id="KW-0408">Iron</keyword>
<keyword id="KW-0472">Membrane</keyword>
<keyword id="KW-0479">Metal-binding</keyword>
<keyword id="KW-0496">Mitochondrion</keyword>
<keyword id="KW-0999">Mitochondrion inner membrane</keyword>
<keyword id="KW-0679">Respiratory chain</keyword>
<keyword id="KW-0812">Transmembrane</keyword>
<keyword id="KW-1133">Transmembrane helix</keyword>
<keyword id="KW-0813">Transport</keyword>
<keyword id="KW-0830">Ubiquinone</keyword>
<proteinExistence type="inferred from homology"/>
<evidence type="ECO:0000250" key="1"/>
<evidence type="ECO:0000250" key="2">
    <source>
        <dbReference type="UniProtKB" id="P00157"/>
    </source>
</evidence>
<evidence type="ECO:0000255" key="3">
    <source>
        <dbReference type="PROSITE-ProRule" id="PRU00967"/>
    </source>
</evidence>
<evidence type="ECO:0000255" key="4">
    <source>
        <dbReference type="PROSITE-ProRule" id="PRU00968"/>
    </source>
</evidence>
<protein>
    <recommendedName>
        <fullName>Cytochrome b</fullName>
    </recommendedName>
    <alternativeName>
        <fullName>Complex III subunit 3</fullName>
    </alternativeName>
    <alternativeName>
        <fullName>Complex III subunit III</fullName>
    </alternativeName>
    <alternativeName>
        <fullName>Cytochrome b-c1 complex subunit 3</fullName>
    </alternativeName>
    <alternativeName>
        <fullName>Ubiquinol-cytochrome-c reductase complex cytochrome b subunit</fullName>
    </alternativeName>
</protein>
<comment type="function">
    <text evidence="2">Component of the ubiquinol-cytochrome c reductase complex (complex III or cytochrome b-c1 complex) that is part of the mitochondrial respiratory chain. The b-c1 complex mediates electron transfer from ubiquinol to cytochrome c. Contributes to the generation of a proton gradient across the mitochondrial membrane that is then used for ATP synthesis.</text>
</comment>
<comment type="cofactor">
    <cofactor evidence="2">
        <name>heme b</name>
        <dbReference type="ChEBI" id="CHEBI:60344"/>
    </cofactor>
    <text evidence="2">Binds 2 heme b groups non-covalently.</text>
</comment>
<comment type="subunit">
    <text evidence="2">The cytochrome bc1 complex contains 11 subunits: 3 respiratory subunits (MT-CYB, CYC1 and UQCRFS1), 2 core proteins (UQCRC1 and UQCRC2) and 6 low-molecular weight proteins (UQCRH/QCR6, UQCRB/QCR7, UQCRQ/QCR8, UQCR10/QCR9, UQCR11/QCR10 and a cleavage product of UQCRFS1). This cytochrome bc1 complex then forms a dimer.</text>
</comment>
<comment type="subcellular location">
    <subcellularLocation>
        <location evidence="2">Mitochondrion inner membrane</location>
        <topology evidence="2">Multi-pass membrane protein</topology>
    </subcellularLocation>
</comment>
<comment type="miscellaneous">
    <text evidence="1">Heme 1 (or BL or b562) is low-potential and absorbs at about 562 nm, and heme 2 (or BH or b566) is high-potential and absorbs at about 566 nm.</text>
</comment>
<comment type="similarity">
    <text evidence="3 4">Belongs to the cytochrome b family.</text>
</comment>
<comment type="caution">
    <text evidence="2">The full-length protein contains only eight transmembrane helices, not nine as predicted by bioinformatics tools.</text>
</comment>